<comment type="function">
    <text evidence="1">Protamines substitute for histones in the chromatin of sperm during the haploid phase of spermatogenesis. They compact sperm DNA into a highly condensed, stable and inactive complex.</text>
</comment>
<comment type="subunit">
    <text evidence="1">Interacts with TDRP.</text>
</comment>
<comment type="subcellular location">
    <subcellularLocation>
        <location evidence="1">Nucleus</location>
    </subcellularLocation>
    <subcellularLocation>
        <location evidence="1">Chromosome</location>
    </subcellularLocation>
</comment>
<comment type="tissue specificity">
    <text>Testis.</text>
</comment>
<comment type="PTM">
    <text evidence="1">Proteolytic processing into mature chains is required for histone eviction during spermatogenesis. Transition proteins (TNP1 and TNP2) are required for processing.</text>
</comment>
<comment type="similarity">
    <text evidence="4">Belongs to the protamine P2 family.</text>
</comment>
<gene>
    <name type="primary">PRM2</name>
</gene>
<dbReference type="EMBL" id="X71338">
    <property type="protein sequence ID" value="CAA50478.1"/>
    <property type="molecule type" value="Genomic_DNA"/>
</dbReference>
<dbReference type="PIR" id="S33336">
    <property type="entry name" value="S33336"/>
</dbReference>
<dbReference type="FunCoup" id="P35297">
    <property type="interactions" value="10"/>
</dbReference>
<dbReference type="STRING" id="9544.ENSMMUP00000014364"/>
<dbReference type="PaxDb" id="9544-ENSMMUP00000014364"/>
<dbReference type="InParanoid" id="P35297"/>
<dbReference type="Proteomes" id="UP000006718">
    <property type="component" value="Unassembled WGS sequence"/>
</dbReference>
<dbReference type="GO" id="GO:0000786">
    <property type="term" value="C:nucleosome"/>
    <property type="evidence" value="ECO:0007669"/>
    <property type="project" value="UniProtKB-KW"/>
</dbReference>
<dbReference type="GO" id="GO:0005634">
    <property type="term" value="C:nucleus"/>
    <property type="evidence" value="ECO:0000318"/>
    <property type="project" value="GO_Central"/>
</dbReference>
<dbReference type="GO" id="GO:0003677">
    <property type="term" value="F:DNA binding"/>
    <property type="evidence" value="ECO:0007669"/>
    <property type="project" value="UniProtKB-KW"/>
</dbReference>
<dbReference type="GO" id="GO:0030261">
    <property type="term" value="P:chromosome condensation"/>
    <property type="evidence" value="ECO:0007669"/>
    <property type="project" value="UniProtKB-KW"/>
</dbReference>
<dbReference type="GO" id="GO:0006997">
    <property type="term" value="P:nucleus organization"/>
    <property type="evidence" value="ECO:0000318"/>
    <property type="project" value="GO_Central"/>
</dbReference>
<dbReference type="GO" id="GO:0007286">
    <property type="term" value="P:spermatid development"/>
    <property type="evidence" value="ECO:0000318"/>
    <property type="project" value="GO_Central"/>
</dbReference>
<dbReference type="GO" id="GO:0007283">
    <property type="term" value="P:spermatogenesis"/>
    <property type="evidence" value="ECO:0000250"/>
    <property type="project" value="UniProtKB"/>
</dbReference>
<dbReference type="InterPro" id="IPR000492">
    <property type="entry name" value="PRM2"/>
</dbReference>
<dbReference type="PANTHER" id="PTHR21341">
    <property type="entry name" value="PROTAMINE-2"/>
    <property type="match status" value="1"/>
</dbReference>
<dbReference type="PANTHER" id="PTHR21341:SF2">
    <property type="entry name" value="PROTAMINE-2"/>
    <property type="match status" value="1"/>
</dbReference>
<dbReference type="Pfam" id="PF00841">
    <property type="entry name" value="Protamine_P2"/>
    <property type="match status" value="1"/>
</dbReference>
<proteinExistence type="evidence at transcript level"/>
<reference key="1">
    <citation type="journal article" date="1993" name="Eur. J. Biochem.">
        <title>Evolution of pro-protamine P2 genes in primates.</title>
        <authorList>
            <person name="Retief J.D."/>
            <person name="Dixon G.H."/>
        </authorList>
    </citation>
    <scope>NUCLEOTIDE SEQUENCE [GENOMIC DNA]</scope>
</reference>
<reference key="2">
    <citation type="journal article" date="1993" name="Eur. J. Biochem.">
        <authorList>
            <person name="Retief J.D."/>
            <person name="Dixon G.H."/>
        </authorList>
    </citation>
    <scope>ERRATUM OF PUBMED:8513810</scope>
</reference>
<name>PRM2_MACMU</name>
<organism>
    <name type="scientific">Macaca mulatta</name>
    <name type="common">Rhesus macaque</name>
    <dbReference type="NCBI Taxonomy" id="9544"/>
    <lineage>
        <taxon>Eukaryota</taxon>
        <taxon>Metazoa</taxon>
        <taxon>Chordata</taxon>
        <taxon>Craniata</taxon>
        <taxon>Vertebrata</taxon>
        <taxon>Euteleostomi</taxon>
        <taxon>Mammalia</taxon>
        <taxon>Eutheria</taxon>
        <taxon>Euarchontoglires</taxon>
        <taxon>Primates</taxon>
        <taxon>Haplorrhini</taxon>
        <taxon>Catarrhini</taxon>
        <taxon>Cercopithecidae</taxon>
        <taxon>Cercopithecinae</taxon>
        <taxon>Macaca</taxon>
    </lineage>
</organism>
<evidence type="ECO:0000250" key="1">
    <source>
        <dbReference type="UniProtKB" id="P07978"/>
    </source>
</evidence>
<evidence type="ECO:0000250" key="2">
    <source>
        <dbReference type="UniProtKB" id="P11248"/>
    </source>
</evidence>
<evidence type="ECO:0000256" key="3">
    <source>
        <dbReference type="SAM" id="MobiDB-lite"/>
    </source>
</evidence>
<evidence type="ECO:0000305" key="4"/>
<accession>P35297</accession>
<sequence>MVRYRMRSLSERSHEVHGQQVHGQDQGHNGQEEQGLNPEHVEVYERTHGHSHYRRRHCSRRRLHRIHRRRHRSCRRRRRRSCRHRRRHRRGCRTRRRRCRRH</sequence>
<keyword id="KW-0158">Chromosome</keyword>
<keyword id="KW-0217">Developmental protein</keyword>
<keyword id="KW-0221">Differentiation</keyword>
<keyword id="KW-0226">DNA condensation</keyword>
<keyword id="KW-0238">DNA-binding</keyword>
<keyword id="KW-0544">Nucleosome core</keyword>
<keyword id="KW-0539">Nucleus</keyword>
<keyword id="KW-0597">Phosphoprotein</keyword>
<keyword id="KW-1185">Reference proteome</keyword>
<keyword id="KW-0744">Spermatogenesis</keyword>
<protein>
    <recommendedName>
        <fullName>Protamine-2</fullName>
    </recommendedName>
    <alternativeName>
        <fullName>Sperm histone P2</fullName>
    </alternativeName>
    <alternativeName>
        <fullName>Sperm protamine P2</fullName>
    </alternativeName>
</protein>
<feature type="chain" id="PRO_0000191602" description="Protamine-2">
    <location>
        <begin position="1"/>
        <end position="102"/>
    </location>
</feature>
<feature type="region of interest" description="Disordered" evidence="3">
    <location>
        <begin position="1"/>
        <end position="102"/>
    </location>
</feature>
<feature type="compositionally biased region" description="Basic and acidic residues" evidence="3">
    <location>
        <begin position="8"/>
        <end position="17"/>
    </location>
</feature>
<feature type="compositionally biased region" description="Low complexity" evidence="3">
    <location>
        <begin position="18"/>
        <end position="29"/>
    </location>
</feature>
<feature type="compositionally biased region" description="Basic and acidic residues" evidence="3">
    <location>
        <begin position="39"/>
        <end position="48"/>
    </location>
</feature>
<feature type="compositionally biased region" description="Basic residues" evidence="3">
    <location>
        <begin position="49"/>
        <end position="102"/>
    </location>
</feature>
<feature type="modified residue" description="Phosphoserine" evidence="2">
    <location>
        <position position="8"/>
    </location>
</feature>
<feature type="modified residue" description="Phosphoserine" evidence="2">
    <location>
        <position position="10"/>
    </location>
</feature>